<dbReference type="EC" id="4.6.1.18"/>
<dbReference type="PIR" id="A00828">
    <property type="entry name" value="NROZ"/>
</dbReference>
<dbReference type="SMR" id="P00681"/>
<dbReference type="GO" id="GO:0005576">
    <property type="term" value="C:extracellular region"/>
    <property type="evidence" value="ECO:0007669"/>
    <property type="project" value="UniProtKB-SubCell"/>
</dbReference>
<dbReference type="GO" id="GO:0016829">
    <property type="term" value="F:lyase activity"/>
    <property type="evidence" value="ECO:0007669"/>
    <property type="project" value="UniProtKB-KW"/>
</dbReference>
<dbReference type="GO" id="GO:0003676">
    <property type="term" value="F:nucleic acid binding"/>
    <property type="evidence" value="ECO:0007669"/>
    <property type="project" value="InterPro"/>
</dbReference>
<dbReference type="GO" id="GO:0004522">
    <property type="term" value="F:ribonuclease A activity"/>
    <property type="evidence" value="ECO:0007669"/>
    <property type="project" value="UniProtKB-EC"/>
</dbReference>
<dbReference type="GO" id="GO:0050830">
    <property type="term" value="P:defense response to Gram-positive bacterium"/>
    <property type="evidence" value="ECO:0007669"/>
    <property type="project" value="TreeGrafter"/>
</dbReference>
<dbReference type="CDD" id="cd06265">
    <property type="entry name" value="RNase_A_canonical"/>
    <property type="match status" value="1"/>
</dbReference>
<dbReference type="FunFam" id="3.10.130.10:FF:000001">
    <property type="entry name" value="Ribonuclease pancreatic"/>
    <property type="match status" value="1"/>
</dbReference>
<dbReference type="Gene3D" id="3.10.130.10">
    <property type="entry name" value="Ribonuclease A-like domain"/>
    <property type="match status" value="1"/>
</dbReference>
<dbReference type="InterPro" id="IPR001427">
    <property type="entry name" value="RNaseA"/>
</dbReference>
<dbReference type="InterPro" id="IPR036816">
    <property type="entry name" value="RNaseA-like_dom_sf"/>
</dbReference>
<dbReference type="InterPro" id="IPR023411">
    <property type="entry name" value="RNaseA_AS"/>
</dbReference>
<dbReference type="InterPro" id="IPR023412">
    <property type="entry name" value="RNaseA_domain"/>
</dbReference>
<dbReference type="PANTHER" id="PTHR11437">
    <property type="entry name" value="RIBONUCLEASE"/>
    <property type="match status" value="1"/>
</dbReference>
<dbReference type="PANTHER" id="PTHR11437:SF24">
    <property type="entry name" value="RIBONUCLEASE PANCREATIC"/>
    <property type="match status" value="1"/>
</dbReference>
<dbReference type="Pfam" id="PF00074">
    <property type="entry name" value="RnaseA"/>
    <property type="match status" value="1"/>
</dbReference>
<dbReference type="PRINTS" id="PR00794">
    <property type="entry name" value="RIBONUCLEASE"/>
</dbReference>
<dbReference type="SMART" id="SM00092">
    <property type="entry name" value="RNAse_Pc"/>
    <property type="match status" value="1"/>
</dbReference>
<dbReference type="SUPFAM" id="SSF54076">
    <property type="entry name" value="RNase A-like"/>
    <property type="match status" value="1"/>
</dbReference>
<dbReference type="PROSITE" id="PS00127">
    <property type="entry name" value="RNASE_PANCREATIC"/>
    <property type="match status" value="1"/>
</dbReference>
<gene>
    <name type="primary">RNASE1</name>
    <name type="synonym">RNS1</name>
</gene>
<comment type="function">
    <text evidence="1">Endonuclease that catalyzes the cleavage of RNA on the 3' side of pyrimidine nucleotides. Acts on single-stranded and double-stranded RNA (By similarity).</text>
</comment>
<comment type="catalytic activity">
    <reaction>
        <text>an [RNA] containing cytidine + H2O = an [RNA]-3'-cytidine-3'-phosphate + a 5'-hydroxy-ribonucleotide-3'-[RNA].</text>
        <dbReference type="EC" id="4.6.1.18"/>
    </reaction>
</comment>
<comment type="catalytic activity">
    <reaction>
        <text>an [RNA] containing uridine + H2O = an [RNA]-3'-uridine-3'-phosphate + a 5'-hydroxy-ribonucleotide-3'-[RNA].</text>
        <dbReference type="EC" id="4.6.1.18"/>
    </reaction>
</comment>
<comment type="subunit">
    <text evidence="1">Monomer. Interacts with and forms tight 1:1 complexes with RNH1. Dimerization of two such complexes may occur. Interaction with RNH1 inhibits this protein (By similarity).</text>
</comment>
<comment type="subcellular location">
    <subcellularLocation>
        <location>Secreted</location>
    </subcellularLocation>
</comment>
<comment type="tissue specificity">
    <text>Pancreas.</text>
</comment>
<comment type="similarity">
    <text evidence="4">Belongs to the pancreatic ribonuclease family.</text>
</comment>
<sequence length="124" mass="13880">KETSAQKFERQHMDSTGSSSSSPTYCNQMMKRREMTQGYCKPVNTFVHEPLADVQAVCSQENVTCKNGNSNCYKSRSALHITDCRLKGNSKYPNCDYQTSQLQKQVIVACEGSPFVPVHFDASV</sequence>
<reference key="1">
    <citation type="journal article" date="1976" name="Int. J. Pept. Protein Res.">
        <title>The primary structure of muskrat pancreatic ribonuclease.</title>
        <authorList>
            <person name="van Dijk H."/>
            <person name="Sloots B."/>
            <person name="van den Berg A."/>
            <person name="Gaastra W."/>
            <person name="Beintema J.J."/>
        </authorList>
    </citation>
    <scope>PROTEIN SEQUENCE</scope>
    <scope>LACK OF GLYCOSYLATION AT ASN-62</scope>
    <source>
        <tissue>Pancreas</tissue>
    </source>
</reference>
<evidence type="ECO:0000250" key="1"/>
<evidence type="ECO:0000256" key="2">
    <source>
        <dbReference type="SAM" id="MobiDB-lite"/>
    </source>
</evidence>
<evidence type="ECO:0000269" key="3">
    <source>
    </source>
</evidence>
<evidence type="ECO:0000305" key="4"/>
<protein>
    <recommendedName>
        <fullName>Ribonuclease pancreatic</fullName>
        <ecNumber>4.6.1.18</ecNumber>
    </recommendedName>
    <alternativeName>
        <fullName>RNase 1</fullName>
    </alternativeName>
    <alternativeName>
        <fullName>RNase A</fullName>
    </alternativeName>
</protein>
<keyword id="KW-0903">Direct protein sequencing</keyword>
<keyword id="KW-1015">Disulfide bond</keyword>
<keyword id="KW-0255">Endonuclease</keyword>
<keyword id="KW-0378">Hydrolase</keyword>
<keyword id="KW-0456">Lyase</keyword>
<keyword id="KW-0540">Nuclease</keyword>
<keyword id="KW-0964">Secreted</keyword>
<organism>
    <name type="scientific">Ondatra zibethicus</name>
    <name type="common">Muskrat</name>
    <dbReference type="NCBI Taxonomy" id="10060"/>
    <lineage>
        <taxon>Eukaryota</taxon>
        <taxon>Metazoa</taxon>
        <taxon>Chordata</taxon>
        <taxon>Craniata</taxon>
        <taxon>Vertebrata</taxon>
        <taxon>Euteleostomi</taxon>
        <taxon>Mammalia</taxon>
        <taxon>Eutheria</taxon>
        <taxon>Euarchontoglires</taxon>
        <taxon>Glires</taxon>
        <taxon>Rodentia</taxon>
        <taxon>Myomorpha</taxon>
        <taxon>Muroidea</taxon>
        <taxon>Cricetidae</taxon>
        <taxon>Arvicolinae</taxon>
        <taxon>Ondatra</taxon>
    </lineage>
</organism>
<name>RNAS1_ONDZI</name>
<accession>P00681</accession>
<feature type="chain" id="PRO_0000057208" description="Ribonuclease pancreatic">
    <location>
        <begin position="1"/>
        <end position="124"/>
    </location>
</feature>
<feature type="region of interest" description="Disordered" evidence="2">
    <location>
        <begin position="1"/>
        <end position="25"/>
    </location>
</feature>
<feature type="compositionally biased region" description="Basic and acidic residues" evidence="2">
    <location>
        <begin position="1"/>
        <end position="13"/>
    </location>
</feature>
<feature type="active site" description="Proton acceptor" evidence="1">
    <location>
        <position position="12"/>
    </location>
</feature>
<feature type="active site" description="Proton donor" evidence="1">
    <location>
        <position position="119"/>
    </location>
</feature>
<feature type="binding site" evidence="1">
    <location>
        <position position="7"/>
    </location>
    <ligand>
        <name>substrate</name>
    </ligand>
</feature>
<feature type="binding site" evidence="1">
    <location>
        <position position="10"/>
    </location>
    <ligand>
        <name>substrate</name>
    </ligand>
</feature>
<feature type="binding site" evidence="1">
    <location>
        <begin position="41"/>
        <end position="45"/>
    </location>
    <ligand>
        <name>substrate</name>
    </ligand>
</feature>
<feature type="binding site" evidence="1">
    <location>
        <position position="66"/>
    </location>
    <ligand>
        <name>substrate</name>
    </ligand>
</feature>
<feature type="binding site" evidence="1">
    <location>
        <position position="85"/>
    </location>
    <ligand>
        <name>substrate</name>
    </ligand>
</feature>
<feature type="site" description="Not glycosylated" evidence="3">
    <location>
        <position position="62"/>
    </location>
</feature>
<feature type="disulfide bond" evidence="1">
    <location>
        <begin position="26"/>
        <end position="84"/>
    </location>
</feature>
<feature type="disulfide bond" evidence="1">
    <location>
        <begin position="40"/>
        <end position="95"/>
    </location>
</feature>
<feature type="disulfide bond" evidence="1">
    <location>
        <begin position="58"/>
        <end position="110"/>
    </location>
</feature>
<feature type="disulfide bond" evidence="1">
    <location>
        <begin position="65"/>
        <end position="72"/>
    </location>
</feature>
<feature type="unsure residue">
    <location>
        <begin position="32"/>
        <end position="33"/>
    </location>
</feature>
<feature type="unsure residue" description="SR or RS">
    <location>
        <begin position="75"/>
        <end position="76"/>
    </location>
</feature>
<proteinExistence type="evidence at protein level"/>